<reference key="1">
    <citation type="journal article" date="2008" name="J. Bacteriol.">
        <title>The pangenome structure of Escherichia coli: comparative genomic analysis of E. coli commensal and pathogenic isolates.</title>
        <authorList>
            <person name="Rasko D.A."/>
            <person name="Rosovitz M.J."/>
            <person name="Myers G.S.A."/>
            <person name="Mongodin E.F."/>
            <person name="Fricke W.F."/>
            <person name="Gajer P."/>
            <person name="Crabtree J."/>
            <person name="Sebaihia M."/>
            <person name="Thomson N.R."/>
            <person name="Chaudhuri R."/>
            <person name="Henderson I.R."/>
            <person name="Sperandio V."/>
            <person name="Ravel J."/>
        </authorList>
    </citation>
    <scope>NUCLEOTIDE SEQUENCE [LARGE SCALE GENOMIC DNA]</scope>
    <source>
        <strain>E24377A / ETEC</strain>
    </source>
</reference>
<feature type="chain" id="PRO_1000083273" description="Replication restart protein PriB">
    <location>
        <begin position="1"/>
        <end position="104"/>
    </location>
</feature>
<feature type="domain" description="SSB" evidence="1">
    <location>
        <begin position="1"/>
        <end position="101"/>
    </location>
</feature>
<sequence length="104" mass="11472">MTNRLVLSGTVCRTPLRKVSPSGIPHCQFVLEHRSVQEEAGFHRQAWCQMPVIVSGHENQAITHSITVGSRITVQGFISCHKAKNGLSKMVLHAEQIELIDSGD</sequence>
<keyword id="KW-0235">DNA replication</keyword>
<keyword id="KW-0238">DNA-binding</keyword>
<keyword id="KW-0639">Primosome</keyword>
<keyword id="KW-1185">Reference proteome</keyword>
<organism>
    <name type="scientific">Escherichia coli O139:H28 (strain E24377A / ETEC)</name>
    <dbReference type="NCBI Taxonomy" id="331111"/>
    <lineage>
        <taxon>Bacteria</taxon>
        <taxon>Pseudomonadati</taxon>
        <taxon>Pseudomonadota</taxon>
        <taxon>Gammaproteobacteria</taxon>
        <taxon>Enterobacterales</taxon>
        <taxon>Enterobacteriaceae</taxon>
        <taxon>Escherichia</taxon>
    </lineage>
</organism>
<proteinExistence type="inferred from homology"/>
<protein>
    <recommendedName>
        <fullName evidence="1">Replication restart protein PriB</fullName>
    </recommendedName>
</protein>
<gene>
    <name evidence="1" type="primary">priB</name>
    <name type="ordered locus">EcE24377A_4762</name>
</gene>
<name>PRIB_ECO24</name>
<accession>A7ZV72</accession>
<dbReference type="EMBL" id="CP000800">
    <property type="protein sequence ID" value="ABV18957.1"/>
    <property type="molecule type" value="Genomic_DNA"/>
</dbReference>
<dbReference type="RefSeq" id="WP_001296681.1">
    <property type="nucleotide sequence ID" value="NC_009801.1"/>
</dbReference>
<dbReference type="SMR" id="A7ZV72"/>
<dbReference type="GeneID" id="93777622"/>
<dbReference type="KEGG" id="ecw:EcE24377A_4762"/>
<dbReference type="HOGENOM" id="CLU_166075_0_0_6"/>
<dbReference type="Proteomes" id="UP000001122">
    <property type="component" value="Chromosome"/>
</dbReference>
<dbReference type="GO" id="GO:1990077">
    <property type="term" value="C:primosome complex"/>
    <property type="evidence" value="ECO:0007669"/>
    <property type="project" value="UniProtKB-KW"/>
</dbReference>
<dbReference type="GO" id="GO:0003697">
    <property type="term" value="F:single-stranded DNA binding"/>
    <property type="evidence" value="ECO:0007669"/>
    <property type="project" value="UniProtKB-UniRule"/>
</dbReference>
<dbReference type="GO" id="GO:0006269">
    <property type="term" value="P:DNA replication, synthesis of primer"/>
    <property type="evidence" value="ECO:0007669"/>
    <property type="project" value="UniProtKB-KW"/>
</dbReference>
<dbReference type="CDD" id="cd04496">
    <property type="entry name" value="SSB_OBF"/>
    <property type="match status" value="1"/>
</dbReference>
<dbReference type="FunFam" id="2.40.50.140:FF:000077">
    <property type="entry name" value="Primosomal replication protein N"/>
    <property type="match status" value="1"/>
</dbReference>
<dbReference type="Gene3D" id="2.40.50.140">
    <property type="entry name" value="Nucleic acid-binding proteins"/>
    <property type="match status" value="1"/>
</dbReference>
<dbReference type="HAMAP" id="MF_00720">
    <property type="entry name" value="PriB"/>
    <property type="match status" value="1"/>
</dbReference>
<dbReference type="InterPro" id="IPR012340">
    <property type="entry name" value="NA-bd_OB-fold"/>
</dbReference>
<dbReference type="InterPro" id="IPR000424">
    <property type="entry name" value="Primosome_PriB/ssb"/>
</dbReference>
<dbReference type="InterPro" id="IPR023646">
    <property type="entry name" value="Prisomal_replication_PriB"/>
</dbReference>
<dbReference type="NCBIfam" id="TIGR04418">
    <property type="entry name" value="PriB_gamma"/>
    <property type="match status" value="1"/>
</dbReference>
<dbReference type="Pfam" id="PF22657">
    <property type="entry name" value="SSB_1"/>
    <property type="match status" value="1"/>
</dbReference>
<dbReference type="PIRSF" id="PIRSF003135">
    <property type="entry name" value="Primosomal_n"/>
    <property type="match status" value="1"/>
</dbReference>
<dbReference type="SUPFAM" id="SSF50249">
    <property type="entry name" value="Nucleic acid-binding proteins"/>
    <property type="match status" value="1"/>
</dbReference>
<dbReference type="PROSITE" id="PS50935">
    <property type="entry name" value="SSB"/>
    <property type="match status" value="1"/>
</dbReference>
<evidence type="ECO:0000255" key="1">
    <source>
        <dbReference type="HAMAP-Rule" id="MF_00720"/>
    </source>
</evidence>
<comment type="function">
    <text evidence="1">Involved in the restart of stalled replication forks, which reloads the replicative helicase on sites other than the origin of replication; the PriA-PriB pathway is the major replication restart pathway. During primosome assembly it facilitates complex formation between PriA and DnaT on DNA; stabilizes PriA on DNA. Stimulates the DNA unwinding activity of PriA helicase.</text>
</comment>
<comment type="subunit">
    <text evidence="1">Homodimer. Interacts with PriA and DnaT. Component of the replication restart primosome. Primosome assembly occurs via a 'hand-off' mechanism. PriA binds to replication forks, subsequently PriB then DnaT bind; DnaT then displaces ssDNA to generate the helicase loading substrate.</text>
</comment>
<comment type="similarity">
    <text evidence="1">Belongs to the PriB family.</text>
</comment>